<feature type="chain" id="PRO_0000308946" description="Cancer/testis antigen family 45 member A1">
    <location>
        <begin position="1"/>
        <end position="189"/>
    </location>
</feature>
<feature type="region of interest" description="Disordered" evidence="1">
    <location>
        <begin position="1"/>
        <end position="27"/>
    </location>
</feature>
<feature type="region of interest" description="Disordered" evidence="1">
    <location>
        <begin position="83"/>
        <end position="118"/>
    </location>
</feature>
<feature type="compositionally biased region" description="Basic and acidic residues" evidence="1">
    <location>
        <begin position="1"/>
        <end position="23"/>
    </location>
</feature>
<accession>Q5HYN5</accession>
<accession>B9EIR8</accession>
<evidence type="ECO:0000256" key="1">
    <source>
        <dbReference type="SAM" id="MobiDB-lite"/>
    </source>
</evidence>
<evidence type="ECO:0000269" key="2">
    <source>
    </source>
</evidence>
<evidence type="ECO:0000269" key="3">
    <source>
    </source>
</evidence>
<evidence type="ECO:0000303" key="4">
    <source>
    </source>
</evidence>
<evidence type="ECO:0000305" key="5"/>
<evidence type="ECO:0000312" key="6">
    <source>
        <dbReference type="HGNC" id="HGNC:33267"/>
    </source>
</evidence>
<comment type="interaction">
    <interactant intactId="EBI-12051833">
        <id>Q5HYN5</id>
    </interactant>
    <interactant intactId="EBI-1003550">
        <id>Q16548</id>
        <label>BCL2A1</label>
    </interactant>
    <organismsDiffer>false</organismsDiffer>
    <experiments>3</experiments>
</comment>
<comment type="interaction">
    <interactant intactId="EBI-12051833">
        <id>Q5HYN5</id>
    </interactant>
    <interactant intactId="EBI-295634">
        <id>Q16543</id>
        <label>CDC37</label>
    </interactant>
    <organismsDiffer>false</organismsDiffer>
    <experiments>3</experiments>
</comment>
<comment type="interaction">
    <interactant intactId="EBI-12051833">
        <id>Q5HYN5</id>
    </interactant>
    <interactant intactId="EBI-456371">
        <id>P61024</id>
        <label>CKS1B</label>
    </interactant>
    <organismsDiffer>false</organismsDiffer>
    <experiments>3</experiments>
</comment>
<comment type="interaction">
    <interactant intactId="EBI-12051833">
        <id>Q5HYN5</id>
    </interactant>
    <interactant intactId="EBI-347804">
        <id>P68400</id>
        <label>CSNK2A1</label>
    </interactant>
    <organismsDiffer>false</organismsDiffer>
    <experiments>3</experiments>
</comment>
<comment type="interaction">
    <interactant intactId="EBI-12051833">
        <id>Q5HYN5</id>
    </interactant>
    <interactant intactId="EBI-12153495">
        <id>P0DMU9</id>
        <label>CT45A10</label>
    </interactant>
    <organismsDiffer>false</organismsDiffer>
    <experiments>3</experiments>
</comment>
<comment type="interaction">
    <interactant intactId="EBI-12051833">
        <id>Q5HYN5</id>
    </interactant>
    <interactant intactId="EBI-10268158">
        <id>Q8N9E0</id>
        <label>FAM133A</label>
    </interactant>
    <organismsDiffer>false</organismsDiffer>
    <experiments>3</experiments>
</comment>
<comment type="interaction">
    <interactant intactId="EBI-12051833">
        <id>Q5HYN5</id>
    </interactant>
    <interactant intactId="EBI-10699759">
        <id>P61328-2</id>
        <label>FGF12</label>
    </interactant>
    <organismsDiffer>false</organismsDiffer>
    <experiments>3</experiments>
</comment>
<comment type="interaction">
    <interactant intactId="EBI-12051833">
        <id>Q5HYN5</id>
    </interactant>
    <interactant intactId="EBI-1052570">
        <id>O95995</id>
        <label>GAS8</label>
    </interactant>
    <organismsDiffer>false</organismsDiffer>
    <experiments>3</experiments>
</comment>
<comment type="interaction">
    <interactant intactId="EBI-12051833">
        <id>Q5HYN5</id>
    </interactant>
    <interactant intactId="EBI-10268010">
        <id>Q8N8X9</id>
        <label>MAB21L3</label>
    </interactant>
    <organismsDiffer>false</organismsDiffer>
    <experiments>3</experiments>
</comment>
<comment type="interaction">
    <interactant intactId="EBI-12051833">
        <id>Q5HYN5</id>
    </interactant>
    <interactant intactId="EBI-742459">
        <id>Q9BU76</id>
        <label>MMTAG2</label>
    </interactant>
    <organismsDiffer>false</organismsDiffer>
    <experiments>3</experiments>
</comment>
<comment type="interaction">
    <interactant intactId="EBI-12051833">
        <id>Q5HYN5</id>
    </interactant>
    <interactant intactId="EBI-3920396">
        <id>Q6ZUT1</id>
        <label>NKAPD1</label>
    </interactant>
    <organismsDiffer>false</organismsDiffer>
    <experiments>3</experiments>
</comment>
<comment type="interaction">
    <interactant intactId="EBI-12051833">
        <id>Q5HYN5</id>
    </interactant>
    <interactant intactId="EBI-741158">
        <id>Q96HA8</id>
        <label>NTAQ1</label>
    </interactant>
    <organismsDiffer>false</organismsDiffer>
    <experiments>3</experiments>
</comment>
<comment type="interaction">
    <interactant intactId="EBI-12051833">
        <id>Q5HYN5</id>
    </interactant>
    <interactant intactId="EBI-5280197">
        <id>O75400-2</id>
        <label>PRPF40A</label>
    </interactant>
    <organismsDiffer>false</organismsDiffer>
    <experiments>3</experiments>
</comment>
<comment type="interaction">
    <interactant intactId="EBI-12051833">
        <id>Q5HYN5</id>
    </interactant>
    <interactant intactId="EBI-12002474">
        <id>Q2KHN1</id>
        <label>RNF151</label>
    </interactant>
    <organismsDiffer>false</organismsDiffer>
    <experiments>3</experiments>
</comment>
<comment type="interaction">
    <interactant intactId="EBI-12051833">
        <id>Q5HYN5</id>
    </interactant>
    <interactant intactId="EBI-354533">
        <id>P35268</id>
        <label>RPL22</label>
    </interactant>
    <organismsDiffer>false</organismsDiffer>
    <experiments>3</experiments>
</comment>
<comment type="interaction">
    <interactant intactId="EBI-12051833">
        <id>Q5HYN5</id>
    </interactant>
    <interactant intactId="EBI-727004">
        <id>O00560</id>
        <label>SDCBP</label>
    </interactant>
    <organismsDiffer>false</organismsDiffer>
    <experiments>3</experiments>
</comment>
<comment type="interaction">
    <interactant intactId="EBI-12051833">
        <id>Q5HYN5</id>
    </interactant>
    <interactant intactId="EBI-742426">
        <id>Q9H190</id>
        <label>SDCBP2</label>
    </interactant>
    <organismsDiffer>false</organismsDiffer>
    <experiments>3</experiments>
</comment>
<comment type="interaction">
    <interactant intactId="EBI-12051833">
        <id>Q5HYN5</id>
    </interactant>
    <interactant intactId="EBI-10268630">
        <id>Q8N9Q2</id>
        <label>SREK1IP1</label>
    </interactant>
    <organismsDiffer>false</organismsDiffer>
    <experiments>3</experiments>
</comment>
<comment type="subcellular location">
    <subcellularLocation>
        <location evidence="3">Nucleus</location>
    </subcellularLocation>
</comment>
<comment type="tissue specificity">
    <text evidence="2">Testis specific. Expressed in cancer cell lines.</text>
</comment>
<comment type="similarity">
    <text>Belongs to the CT45 family.</text>
</comment>
<name>CT451_HUMAN</name>
<reference key="1">
    <citation type="journal article" date="2005" name="Proc. Natl. Acad. Sci. U.S.A.">
        <title>Identification of cancer/testis-antigen genes by massively parallel signature sequencing.</title>
        <authorList>
            <person name="Chen Y.-T."/>
            <person name="Scanlan M.J."/>
            <person name="Venditti C.A."/>
            <person name="Chua R."/>
            <person name="Theiler G."/>
            <person name="Stevenson B.J."/>
            <person name="Iseli C."/>
            <person name="Gure A.O."/>
            <person name="Vasicek T."/>
            <person name="Strausberg R.L."/>
            <person name="Jongeneel C.V."/>
            <person name="Old L.J."/>
            <person name="Simpson A.J.G."/>
        </authorList>
    </citation>
    <scope>NUCLEOTIDE SEQUENCE [MRNA]</scope>
    <scope>TISSUE SPECIFICITY</scope>
    <scope>IDENTIFICATION AS A CANCER/TESTIS ANTIGEN</scope>
</reference>
<reference key="2">
    <citation type="journal article" date="2005" name="Nature">
        <title>The DNA sequence of the human X chromosome.</title>
        <authorList>
            <person name="Ross M.T."/>
            <person name="Grafham D.V."/>
            <person name="Coffey A.J."/>
            <person name="Scherer S."/>
            <person name="McLay K."/>
            <person name="Muzny D."/>
            <person name="Platzer M."/>
            <person name="Howell G.R."/>
            <person name="Burrows C."/>
            <person name="Bird C.P."/>
            <person name="Frankish A."/>
            <person name="Lovell F.L."/>
            <person name="Howe K.L."/>
            <person name="Ashurst J.L."/>
            <person name="Fulton R.S."/>
            <person name="Sudbrak R."/>
            <person name="Wen G."/>
            <person name="Jones M.C."/>
            <person name="Hurles M.E."/>
            <person name="Andrews T.D."/>
            <person name="Scott C.E."/>
            <person name="Searle S."/>
            <person name="Ramser J."/>
            <person name="Whittaker A."/>
            <person name="Deadman R."/>
            <person name="Carter N.P."/>
            <person name="Hunt S.E."/>
            <person name="Chen R."/>
            <person name="Cree A."/>
            <person name="Gunaratne P."/>
            <person name="Havlak P."/>
            <person name="Hodgson A."/>
            <person name="Metzker M.L."/>
            <person name="Richards S."/>
            <person name="Scott G."/>
            <person name="Steffen D."/>
            <person name="Sodergren E."/>
            <person name="Wheeler D.A."/>
            <person name="Worley K.C."/>
            <person name="Ainscough R."/>
            <person name="Ambrose K.D."/>
            <person name="Ansari-Lari M.A."/>
            <person name="Aradhya S."/>
            <person name="Ashwell R.I."/>
            <person name="Babbage A.K."/>
            <person name="Bagguley C.L."/>
            <person name="Ballabio A."/>
            <person name="Banerjee R."/>
            <person name="Barker G.E."/>
            <person name="Barlow K.F."/>
            <person name="Barrett I.P."/>
            <person name="Bates K.N."/>
            <person name="Beare D.M."/>
            <person name="Beasley H."/>
            <person name="Beasley O."/>
            <person name="Beck A."/>
            <person name="Bethel G."/>
            <person name="Blechschmidt K."/>
            <person name="Brady N."/>
            <person name="Bray-Allen S."/>
            <person name="Bridgeman A.M."/>
            <person name="Brown A.J."/>
            <person name="Brown M.J."/>
            <person name="Bonnin D."/>
            <person name="Bruford E.A."/>
            <person name="Buhay C."/>
            <person name="Burch P."/>
            <person name="Burford D."/>
            <person name="Burgess J."/>
            <person name="Burrill W."/>
            <person name="Burton J."/>
            <person name="Bye J.M."/>
            <person name="Carder C."/>
            <person name="Carrel L."/>
            <person name="Chako J."/>
            <person name="Chapman J.C."/>
            <person name="Chavez D."/>
            <person name="Chen E."/>
            <person name="Chen G."/>
            <person name="Chen Y."/>
            <person name="Chen Z."/>
            <person name="Chinault C."/>
            <person name="Ciccodicola A."/>
            <person name="Clark S.Y."/>
            <person name="Clarke G."/>
            <person name="Clee C.M."/>
            <person name="Clegg S."/>
            <person name="Clerc-Blankenburg K."/>
            <person name="Clifford K."/>
            <person name="Cobley V."/>
            <person name="Cole C.G."/>
            <person name="Conquer J.S."/>
            <person name="Corby N."/>
            <person name="Connor R.E."/>
            <person name="David R."/>
            <person name="Davies J."/>
            <person name="Davis C."/>
            <person name="Davis J."/>
            <person name="Delgado O."/>
            <person name="Deshazo D."/>
            <person name="Dhami P."/>
            <person name="Ding Y."/>
            <person name="Dinh H."/>
            <person name="Dodsworth S."/>
            <person name="Draper H."/>
            <person name="Dugan-Rocha S."/>
            <person name="Dunham A."/>
            <person name="Dunn M."/>
            <person name="Durbin K.J."/>
            <person name="Dutta I."/>
            <person name="Eades T."/>
            <person name="Ellwood M."/>
            <person name="Emery-Cohen A."/>
            <person name="Errington H."/>
            <person name="Evans K.L."/>
            <person name="Faulkner L."/>
            <person name="Francis F."/>
            <person name="Frankland J."/>
            <person name="Fraser A.E."/>
            <person name="Galgoczy P."/>
            <person name="Gilbert J."/>
            <person name="Gill R."/>
            <person name="Gloeckner G."/>
            <person name="Gregory S.G."/>
            <person name="Gribble S."/>
            <person name="Griffiths C."/>
            <person name="Grocock R."/>
            <person name="Gu Y."/>
            <person name="Gwilliam R."/>
            <person name="Hamilton C."/>
            <person name="Hart E.A."/>
            <person name="Hawes A."/>
            <person name="Heath P.D."/>
            <person name="Heitmann K."/>
            <person name="Hennig S."/>
            <person name="Hernandez J."/>
            <person name="Hinzmann B."/>
            <person name="Ho S."/>
            <person name="Hoffs M."/>
            <person name="Howden P.J."/>
            <person name="Huckle E.J."/>
            <person name="Hume J."/>
            <person name="Hunt P.J."/>
            <person name="Hunt A.R."/>
            <person name="Isherwood J."/>
            <person name="Jacob L."/>
            <person name="Johnson D."/>
            <person name="Jones S."/>
            <person name="de Jong P.J."/>
            <person name="Joseph S.S."/>
            <person name="Keenan S."/>
            <person name="Kelly S."/>
            <person name="Kershaw J.K."/>
            <person name="Khan Z."/>
            <person name="Kioschis P."/>
            <person name="Klages S."/>
            <person name="Knights A.J."/>
            <person name="Kosiura A."/>
            <person name="Kovar-Smith C."/>
            <person name="Laird G.K."/>
            <person name="Langford C."/>
            <person name="Lawlor S."/>
            <person name="Leversha M."/>
            <person name="Lewis L."/>
            <person name="Liu W."/>
            <person name="Lloyd C."/>
            <person name="Lloyd D.M."/>
            <person name="Loulseged H."/>
            <person name="Loveland J.E."/>
            <person name="Lovell J.D."/>
            <person name="Lozado R."/>
            <person name="Lu J."/>
            <person name="Lyne R."/>
            <person name="Ma J."/>
            <person name="Maheshwari M."/>
            <person name="Matthews L.H."/>
            <person name="McDowall J."/>
            <person name="McLaren S."/>
            <person name="McMurray A."/>
            <person name="Meidl P."/>
            <person name="Meitinger T."/>
            <person name="Milne S."/>
            <person name="Miner G."/>
            <person name="Mistry S.L."/>
            <person name="Morgan M."/>
            <person name="Morris S."/>
            <person name="Mueller I."/>
            <person name="Mullikin J.C."/>
            <person name="Nguyen N."/>
            <person name="Nordsiek G."/>
            <person name="Nyakatura G."/>
            <person name="O'dell C.N."/>
            <person name="Okwuonu G."/>
            <person name="Palmer S."/>
            <person name="Pandian R."/>
            <person name="Parker D."/>
            <person name="Parrish J."/>
            <person name="Pasternak S."/>
            <person name="Patel D."/>
            <person name="Pearce A.V."/>
            <person name="Pearson D.M."/>
            <person name="Pelan S.E."/>
            <person name="Perez L."/>
            <person name="Porter K.M."/>
            <person name="Ramsey Y."/>
            <person name="Reichwald K."/>
            <person name="Rhodes S."/>
            <person name="Ridler K.A."/>
            <person name="Schlessinger D."/>
            <person name="Schueler M.G."/>
            <person name="Sehra H.K."/>
            <person name="Shaw-Smith C."/>
            <person name="Shen H."/>
            <person name="Sheridan E.M."/>
            <person name="Shownkeen R."/>
            <person name="Skuce C.D."/>
            <person name="Smith M.L."/>
            <person name="Sotheran E.C."/>
            <person name="Steingruber H.E."/>
            <person name="Steward C.A."/>
            <person name="Storey R."/>
            <person name="Swann R.M."/>
            <person name="Swarbreck D."/>
            <person name="Tabor P.E."/>
            <person name="Taudien S."/>
            <person name="Taylor T."/>
            <person name="Teague B."/>
            <person name="Thomas K."/>
            <person name="Thorpe A."/>
            <person name="Timms K."/>
            <person name="Tracey A."/>
            <person name="Trevanion S."/>
            <person name="Tromans A.C."/>
            <person name="d'Urso M."/>
            <person name="Verduzco D."/>
            <person name="Villasana D."/>
            <person name="Waldron L."/>
            <person name="Wall M."/>
            <person name="Wang Q."/>
            <person name="Warren J."/>
            <person name="Warry G.L."/>
            <person name="Wei X."/>
            <person name="West A."/>
            <person name="Whitehead S.L."/>
            <person name="Whiteley M.N."/>
            <person name="Wilkinson J.E."/>
            <person name="Willey D.L."/>
            <person name="Williams G."/>
            <person name="Williams L."/>
            <person name="Williamson A."/>
            <person name="Williamson H."/>
            <person name="Wilming L."/>
            <person name="Woodmansey R.L."/>
            <person name="Wray P.W."/>
            <person name="Yen J."/>
            <person name="Zhang J."/>
            <person name="Zhou J."/>
            <person name="Zoghbi H."/>
            <person name="Zorilla S."/>
            <person name="Buck D."/>
            <person name="Reinhardt R."/>
            <person name="Poustka A."/>
            <person name="Rosenthal A."/>
            <person name="Lehrach H."/>
            <person name="Meindl A."/>
            <person name="Minx P.J."/>
            <person name="Hillier L.W."/>
            <person name="Willard H.F."/>
            <person name="Wilson R.K."/>
            <person name="Waterston R.H."/>
            <person name="Rice C.M."/>
            <person name="Vaudin M."/>
            <person name="Coulson A."/>
            <person name="Nelson D.L."/>
            <person name="Weinstock G."/>
            <person name="Sulston J.E."/>
            <person name="Durbin R.M."/>
            <person name="Hubbard T."/>
            <person name="Gibbs R.A."/>
            <person name="Beck S."/>
            <person name="Rogers J."/>
            <person name="Bentley D.R."/>
        </authorList>
    </citation>
    <scope>NUCLEOTIDE SEQUENCE [LARGE SCALE GENOMIC DNA]</scope>
</reference>
<reference key="3">
    <citation type="journal article" date="2004" name="Genome Res.">
        <title>The status, quality, and expansion of the NIH full-length cDNA project: the Mammalian Gene Collection (MGC).</title>
        <authorList>
            <consortium name="The MGC Project Team"/>
        </authorList>
    </citation>
    <scope>NUCLEOTIDE SEQUENCE [LARGE SCALE MRNA]</scope>
</reference>
<reference key="4">
    <citation type="journal article" date="2019" name="J. Proteome Res.">
        <title>Cell Type-Specific Expression of Testis Elevated Genes Based on Transcriptomics and Antibody-Based Proteomics.</title>
        <authorList>
            <person name="Pineau C."/>
            <person name="Hikmet F."/>
            <person name="Zhang C."/>
            <person name="Oksvold P."/>
            <person name="Chen S."/>
            <person name="Fagerberg L."/>
            <person name="Uhlen M."/>
            <person name="Lindskog C."/>
        </authorList>
    </citation>
    <scope>SUBCELLULAR LOCATION</scope>
</reference>
<dbReference type="EMBL" id="AY743709">
    <property type="protein sequence ID" value="AAW66464.1"/>
    <property type="molecule type" value="mRNA"/>
</dbReference>
<dbReference type="EMBL" id="AC240442">
    <property type="status" value="NOT_ANNOTATED_CDS"/>
    <property type="molecule type" value="Genomic_DNA"/>
</dbReference>
<dbReference type="EMBL" id="BC140913">
    <property type="protein sequence ID" value="AAI40914.1"/>
    <property type="molecule type" value="mRNA"/>
</dbReference>
<dbReference type="CCDS" id="CCDS48174.1"/>
<dbReference type="RefSeq" id="NP_001017417.1">
    <property type="nucleotide sequence ID" value="NM_001017417.3"/>
</dbReference>
<dbReference type="RefSeq" id="XP_005278198.1">
    <property type="nucleotide sequence ID" value="XM_005278141.5"/>
</dbReference>
<dbReference type="RefSeq" id="XP_011529654.1">
    <property type="nucleotide sequence ID" value="XM_011531352.2"/>
</dbReference>
<dbReference type="RefSeq" id="XP_016855470.1">
    <property type="nucleotide sequence ID" value="XM_016999981.1"/>
</dbReference>
<dbReference type="RefSeq" id="XP_016855471.1">
    <property type="nucleotide sequence ID" value="XM_016999982.1"/>
</dbReference>
<dbReference type="RefSeq" id="XP_016855472.1">
    <property type="nucleotide sequence ID" value="XM_016999983.1"/>
</dbReference>
<dbReference type="RefSeq" id="XP_016855473.1">
    <property type="nucleotide sequence ID" value="XM_016999984.1"/>
</dbReference>
<dbReference type="RefSeq" id="XP_047298129.1">
    <property type="nucleotide sequence ID" value="XM_047442173.1"/>
</dbReference>
<dbReference type="RefSeq" id="XP_054183195.1">
    <property type="nucleotide sequence ID" value="XM_054327220.1"/>
</dbReference>
<dbReference type="RefSeq" id="XP_054183196.1">
    <property type="nucleotide sequence ID" value="XM_054327221.1"/>
</dbReference>
<dbReference type="SMR" id="Q5HYN5"/>
<dbReference type="BioGRID" id="139069">
    <property type="interactions" value="26"/>
</dbReference>
<dbReference type="FunCoup" id="Q5HYN5">
    <property type="interactions" value="5"/>
</dbReference>
<dbReference type="IntAct" id="Q5HYN5">
    <property type="interactions" value="18"/>
</dbReference>
<dbReference type="STRING" id="9606.ENSP00000470185"/>
<dbReference type="GlyGen" id="Q5HYN5">
    <property type="glycosylation" value="1 site"/>
</dbReference>
<dbReference type="iPTMnet" id="Q5HYN5"/>
<dbReference type="PhosphoSitePlus" id="Q5HYN5"/>
<dbReference type="BioMuta" id="CT45A1"/>
<dbReference type="DMDM" id="74741538"/>
<dbReference type="jPOST" id="Q5HYN5"/>
<dbReference type="MassIVE" id="Q5HYN5"/>
<dbReference type="PaxDb" id="9606-ENSP00000470185"/>
<dbReference type="PeptideAtlas" id="Q5HYN5"/>
<dbReference type="Pumba" id="Q5HYN5"/>
<dbReference type="Antibodypedia" id="72363">
    <property type="antibodies" value="52 antibodies from 15 providers"/>
</dbReference>
<dbReference type="DNASU" id="541466"/>
<dbReference type="Ensembl" id="ENST00000594117.4">
    <property type="protein sequence ID" value="ENSP00000470185.2"/>
    <property type="gene ID" value="ENSG00000268940.6"/>
</dbReference>
<dbReference type="Ensembl" id="ENST00000594565.6">
    <property type="protein sequence ID" value="ENSP00000472303.1"/>
    <property type="gene ID" value="ENSG00000268940.6"/>
</dbReference>
<dbReference type="GeneID" id="541466"/>
<dbReference type="KEGG" id="hsa:541466"/>
<dbReference type="MANE-Select" id="ENST00000594565.6">
    <property type="protein sequence ID" value="ENSP00000472303.1"/>
    <property type="RefSeq nucleotide sequence ID" value="NM_001017417.3"/>
    <property type="RefSeq protein sequence ID" value="NP_001017417.1"/>
</dbReference>
<dbReference type="UCSC" id="uc033ewc.1">
    <property type="organism name" value="human"/>
</dbReference>
<dbReference type="AGR" id="HGNC:33267"/>
<dbReference type="CTD" id="541466"/>
<dbReference type="DisGeNET" id="541466"/>
<dbReference type="GeneCards" id="CT45A1"/>
<dbReference type="HGNC" id="HGNC:33267">
    <property type="gene designation" value="CT45A1"/>
</dbReference>
<dbReference type="HPA" id="ENSG00000268940">
    <property type="expression patterns" value="Tissue enriched (testis)"/>
</dbReference>
<dbReference type="MIM" id="300648">
    <property type="type" value="gene"/>
</dbReference>
<dbReference type="neXtProt" id="NX_Q5HYN5"/>
<dbReference type="OpenTargets" id="ENSG00000268940"/>
<dbReference type="PharmGKB" id="PA164718185"/>
<dbReference type="VEuPathDB" id="HostDB:ENSG00000268940"/>
<dbReference type="eggNOG" id="KOG3768">
    <property type="taxonomic scope" value="Eukaryota"/>
</dbReference>
<dbReference type="GeneTree" id="ENSGT00390000016655"/>
<dbReference type="HOGENOM" id="CLU_123664_0_0_1"/>
<dbReference type="InParanoid" id="Q5HYN5"/>
<dbReference type="OrthoDB" id="9520782at2759"/>
<dbReference type="PAN-GO" id="Q5HYN5">
    <property type="GO annotations" value="2 GO annotations based on evolutionary models"/>
</dbReference>
<dbReference type="PhylomeDB" id="Q5HYN5"/>
<dbReference type="PathwayCommons" id="Q5HYN5"/>
<dbReference type="SignaLink" id="Q5HYN5"/>
<dbReference type="BioGRID-ORCS" id="541466">
    <property type="hits" value="12 hits in 245 CRISPR screens"/>
</dbReference>
<dbReference type="GenomeRNAi" id="541466"/>
<dbReference type="Pharos" id="Q5HYN5">
    <property type="development level" value="Tbio"/>
</dbReference>
<dbReference type="PRO" id="PR:Q5HYN5"/>
<dbReference type="Proteomes" id="UP000005640">
    <property type="component" value="Chromosome X"/>
</dbReference>
<dbReference type="RNAct" id="Q5HYN5">
    <property type="molecule type" value="protein"/>
</dbReference>
<dbReference type="Bgee" id="ENSG00000268940">
    <property type="expression patterns" value="Expressed in primordial germ cell in gonad and 47 other cell types or tissues"/>
</dbReference>
<dbReference type="GO" id="GO:0005634">
    <property type="term" value="C:nucleus"/>
    <property type="evidence" value="ECO:0000314"/>
    <property type="project" value="UniProtKB"/>
</dbReference>
<dbReference type="InterPro" id="IPR029307">
    <property type="entry name" value="INT_SG_DDX_CT_C"/>
</dbReference>
<dbReference type="InterPro" id="IPR051113">
    <property type="entry name" value="Integrator_subunit6"/>
</dbReference>
<dbReference type="PANTHER" id="PTHR12957">
    <property type="entry name" value="DEAD/H BOX POLYPEPTIDE 26/DICE1-RELATED"/>
    <property type="match status" value="1"/>
</dbReference>
<dbReference type="PANTHER" id="PTHR12957:SF2">
    <property type="entry name" value="INTEGRATOR COMPLEX SUBUNIT 6"/>
    <property type="match status" value="1"/>
</dbReference>
<dbReference type="Pfam" id="PF15300">
    <property type="entry name" value="INT_SG_DDX_CT_C"/>
    <property type="match status" value="1"/>
</dbReference>
<sequence>MTDKTEKVAVDPETVFKRPRECDSPSYQKRQRMALLARKQGAGDSLIAGSAMSKAKKLMTGHAIPPSQLDSQIDDFTGFSKDRMMQKPGSNAPVGGNVTSSFSGDDLECRETASSPKSQREINADIKRKLVKELRCVGQKYEKIFEMLEGVQGPTAVRKRFFESIIKEAARCMRRDFVKHLKKKLKRMI</sequence>
<keyword id="KW-0539">Nucleus</keyword>
<keyword id="KW-1185">Reference proteome</keyword>
<organism>
    <name type="scientific">Homo sapiens</name>
    <name type="common">Human</name>
    <dbReference type="NCBI Taxonomy" id="9606"/>
    <lineage>
        <taxon>Eukaryota</taxon>
        <taxon>Metazoa</taxon>
        <taxon>Chordata</taxon>
        <taxon>Craniata</taxon>
        <taxon>Vertebrata</taxon>
        <taxon>Euteleostomi</taxon>
        <taxon>Mammalia</taxon>
        <taxon>Eutheria</taxon>
        <taxon>Euarchontoglires</taxon>
        <taxon>Primates</taxon>
        <taxon>Haplorrhini</taxon>
        <taxon>Catarrhini</taxon>
        <taxon>Hominidae</taxon>
        <taxon>Homo</taxon>
    </lineage>
</organism>
<proteinExistence type="evidence at protein level"/>
<gene>
    <name evidence="6" type="primary">CT45A1</name>
    <name evidence="4" type="synonym">CT45-1</name>
</gene>
<protein>
    <recommendedName>
        <fullName evidence="6">Cancer/testis antigen family 45 member A1</fullName>
    </recommendedName>
    <alternativeName>
        <fullName evidence="4">Cancer/testis antigen 45-1</fullName>
    </alternativeName>
    <alternativeName>
        <fullName evidence="5">Cancer/testis antigen 45A1</fullName>
    </alternativeName>
</protein>